<name>RL21_METTP</name>
<proteinExistence type="inferred from homology"/>
<gene>
    <name evidence="1" type="primary">rpl21e</name>
    <name type="ordered locus">Mthe_0993</name>
</gene>
<organism>
    <name type="scientific">Methanothrix thermoacetophila (strain DSM 6194 / JCM 14653 / NBRC 101360 / PT)</name>
    <name type="common">Methanosaeta thermophila</name>
    <dbReference type="NCBI Taxonomy" id="349307"/>
    <lineage>
        <taxon>Archaea</taxon>
        <taxon>Methanobacteriati</taxon>
        <taxon>Methanobacteriota</taxon>
        <taxon>Stenosarchaea group</taxon>
        <taxon>Methanomicrobia</taxon>
        <taxon>Methanotrichales</taxon>
        <taxon>Methanotrichaceae</taxon>
        <taxon>Methanothrix</taxon>
    </lineage>
</organism>
<evidence type="ECO:0000255" key="1">
    <source>
        <dbReference type="HAMAP-Rule" id="MF_00369"/>
    </source>
</evidence>
<evidence type="ECO:0000305" key="2"/>
<dbReference type="EMBL" id="CP000477">
    <property type="protein sequence ID" value="ABK14778.1"/>
    <property type="molecule type" value="Genomic_DNA"/>
</dbReference>
<dbReference type="RefSeq" id="WP_011696172.1">
    <property type="nucleotide sequence ID" value="NC_008553.1"/>
</dbReference>
<dbReference type="SMR" id="A0B7V4"/>
<dbReference type="STRING" id="349307.Mthe_0993"/>
<dbReference type="GeneID" id="4462869"/>
<dbReference type="KEGG" id="mtp:Mthe_0993"/>
<dbReference type="HOGENOM" id="CLU_103610_1_1_2"/>
<dbReference type="OrthoDB" id="6295at2157"/>
<dbReference type="Proteomes" id="UP000000674">
    <property type="component" value="Chromosome"/>
</dbReference>
<dbReference type="GO" id="GO:1990904">
    <property type="term" value="C:ribonucleoprotein complex"/>
    <property type="evidence" value="ECO:0007669"/>
    <property type="project" value="UniProtKB-KW"/>
</dbReference>
<dbReference type="GO" id="GO:0005840">
    <property type="term" value="C:ribosome"/>
    <property type="evidence" value="ECO:0007669"/>
    <property type="project" value="UniProtKB-KW"/>
</dbReference>
<dbReference type="GO" id="GO:0003735">
    <property type="term" value="F:structural constituent of ribosome"/>
    <property type="evidence" value="ECO:0007669"/>
    <property type="project" value="InterPro"/>
</dbReference>
<dbReference type="GO" id="GO:0006412">
    <property type="term" value="P:translation"/>
    <property type="evidence" value="ECO:0007669"/>
    <property type="project" value="UniProtKB-UniRule"/>
</dbReference>
<dbReference type="FunFam" id="2.30.30.70:FF:000001">
    <property type="entry name" value="60S ribosomal protein L21"/>
    <property type="match status" value="1"/>
</dbReference>
<dbReference type="Gene3D" id="2.30.30.70">
    <property type="entry name" value="Ribosomal protein L21"/>
    <property type="match status" value="1"/>
</dbReference>
<dbReference type="HAMAP" id="MF_00369">
    <property type="entry name" value="Ribosomal_eL21"/>
    <property type="match status" value="1"/>
</dbReference>
<dbReference type="InterPro" id="IPR001147">
    <property type="entry name" value="Ribosomal_eL21"/>
</dbReference>
<dbReference type="InterPro" id="IPR022856">
    <property type="entry name" value="Ribosomal_eL21_arc"/>
</dbReference>
<dbReference type="InterPro" id="IPR018259">
    <property type="entry name" value="Ribosomal_eL21_CS"/>
</dbReference>
<dbReference type="InterPro" id="IPR036948">
    <property type="entry name" value="Ribosomal_eL21_sf"/>
</dbReference>
<dbReference type="InterPro" id="IPR008991">
    <property type="entry name" value="Translation_prot_SH3-like_sf"/>
</dbReference>
<dbReference type="NCBIfam" id="NF003303">
    <property type="entry name" value="PRK04306.1"/>
    <property type="match status" value="1"/>
</dbReference>
<dbReference type="PANTHER" id="PTHR20981">
    <property type="entry name" value="60S RIBOSOMAL PROTEIN L21"/>
    <property type="match status" value="1"/>
</dbReference>
<dbReference type="Pfam" id="PF01157">
    <property type="entry name" value="Ribosomal_L21e"/>
    <property type="match status" value="1"/>
</dbReference>
<dbReference type="SUPFAM" id="SSF50104">
    <property type="entry name" value="Translation proteins SH3-like domain"/>
    <property type="match status" value="1"/>
</dbReference>
<dbReference type="PROSITE" id="PS01171">
    <property type="entry name" value="RIBOSOMAL_L21E"/>
    <property type="match status" value="1"/>
</dbReference>
<keyword id="KW-1185">Reference proteome</keyword>
<keyword id="KW-0687">Ribonucleoprotein</keyword>
<keyword id="KW-0689">Ribosomal protein</keyword>
<protein>
    <recommendedName>
        <fullName evidence="1">Large ribosomal subunit protein eL21</fullName>
    </recommendedName>
    <alternativeName>
        <fullName evidence="2">50S ribosomal protein L21e</fullName>
    </alternativeName>
</protein>
<reference key="1">
    <citation type="submission" date="2006-10" db="EMBL/GenBank/DDBJ databases">
        <title>Complete sequence of Methanosaeta thermophila PT.</title>
        <authorList>
            <consortium name="US DOE Joint Genome Institute"/>
            <person name="Copeland A."/>
            <person name="Lucas S."/>
            <person name="Lapidus A."/>
            <person name="Barry K."/>
            <person name="Detter J.C."/>
            <person name="Glavina del Rio T."/>
            <person name="Hammon N."/>
            <person name="Israni S."/>
            <person name="Pitluck S."/>
            <person name="Chain P."/>
            <person name="Malfatti S."/>
            <person name="Shin M."/>
            <person name="Vergez L."/>
            <person name="Schmutz J."/>
            <person name="Larimer F."/>
            <person name="Land M."/>
            <person name="Hauser L."/>
            <person name="Kyrpides N."/>
            <person name="Kim E."/>
            <person name="Smith K.S."/>
            <person name="Ingram-Smith C."/>
            <person name="Richardson P."/>
        </authorList>
    </citation>
    <scope>NUCLEOTIDE SEQUENCE [LARGE SCALE GENOMIC DNA]</scope>
    <source>
        <strain>DSM 6194 / JCM 14653 / NBRC 101360 / PT</strain>
    </source>
</reference>
<sequence>MPKSHGFRKNTRDKLKKSVRERGISPVVRAIQDFAVGEKVHIIIDPSIHKGMPHPKFHGRTGTVVGRRGRAYVLEVPDQSAKKLVIALPEHLVAQK</sequence>
<accession>A0B7V4</accession>
<comment type="similarity">
    <text evidence="1">Belongs to the eukaryotic ribosomal protein eL21 family.</text>
</comment>
<feature type="chain" id="PRO_1000007125" description="Large ribosomal subunit protein eL21">
    <location>
        <begin position="1"/>
        <end position="96"/>
    </location>
</feature>